<protein>
    <recommendedName>
        <fullName evidence="1">NAD kinase</fullName>
        <ecNumber evidence="1">2.7.1.23</ecNumber>
    </recommendedName>
    <alternativeName>
        <fullName evidence="1">ATP-dependent NAD kinase</fullName>
    </alternativeName>
</protein>
<evidence type="ECO:0000255" key="1">
    <source>
        <dbReference type="HAMAP-Rule" id="MF_00361"/>
    </source>
</evidence>
<sequence length="296" mass="32309">MEHFRNIGIIGRLGSTQVLDTVRRLKKFLLERHLHVILEDTIAEILPGHGLQTSSRKMLGEVCDMVIVVGGDGSLLGAARALARHNVPVLGINRGSLGFLTDIRPDELEVEVAKVLDGHYLVENRFLLQAEVRRHGEAIGQGDALNDVVLHPGKSTRMIEFELYIDGQFVCSQKADGLIVATPTGSTAYALSAGGPIMHPKLDAIVIVPMYPHMLSSRPIVVDGNSELKIVVSKDMQIYPQVSCDGQNHFTCAPGDTITVSKKAQKLRLIHPLDHNYYEVCRTKLGWGSRLGGGGD</sequence>
<proteinExistence type="inferred from homology"/>
<dbReference type="EC" id="2.7.1.23" evidence="1"/>
<dbReference type="EMBL" id="AM181176">
    <property type="protein sequence ID" value="CAY48906.1"/>
    <property type="molecule type" value="Genomic_DNA"/>
</dbReference>
<dbReference type="RefSeq" id="WP_003190745.1">
    <property type="nucleotide sequence ID" value="NC_012660.1"/>
</dbReference>
<dbReference type="SMR" id="C3K9T0"/>
<dbReference type="STRING" id="294.SRM1_02239"/>
<dbReference type="eggNOG" id="COG0061">
    <property type="taxonomic scope" value="Bacteria"/>
</dbReference>
<dbReference type="HOGENOM" id="CLU_008831_0_1_6"/>
<dbReference type="OrthoDB" id="9774737at2"/>
<dbReference type="GO" id="GO:0005737">
    <property type="term" value="C:cytoplasm"/>
    <property type="evidence" value="ECO:0007669"/>
    <property type="project" value="UniProtKB-SubCell"/>
</dbReference>
<dbReference type="GO" id="GO:0005524">
    <property type="term" value="F:ATP binding"/>
    <property type="evidence" value="ECO:0007669"/>
    <property type="project" value="UniProtKB-KW"/>
</dbReference>
<dbReference type="GO" id="GO:0046872">
    <property type="term" value="F:metal ion binding"/>
    <property type="evidence" value="ECO:0007669"/>
    <property type="project" value="UniProtKB-UniRule"/>
</dbReference>
<dbReference type="GO" id="GO:0051287">
    <property type="term" value="F:NAD binding"/>
    <property type="evidence" value="ECO:0007669"/>
    <property type="project" value="UniProtKB-ARBA"/>
</dbReference>
<dbReference type="GO" id="GO:0003951">
    <property type="term" value="F:NAD+ kinase activity"/>
    <property type="evidence" value="ECO:0007669"/>
    <property type="project" value="UniProtKB-UniRule"/>
</dbReference>
<dbReference type="GO" id="GO:0019674">
    <property type="term" value="P:NAD metabolic process"/>
    <property type="evidence" value="ECO:0007669"/>
    <property type="project" value="InterPro"/>
</dbReference>
<dbReference type="GO" id="GO:0006741">
    <property type="term" value="P:NADP biosynthetic process"/>
    <property type="evidence" value="ECO:0007669"/>
    <property type="project" value="UniProtKB-UniRule"/>
</dbReference>
<dbReference type="FunFam" id="2.60.200.30:FF:000001">
    <property type="entry name" value="NAD kinase"/>
    <property type="match status" value="1"/>
</dbReference>
<dbReference type="Gene3D" id="3.40.50.10330">
    <property type="entry name" value="Probable inorganic polyphosphate/atp-NAD kinase, domain 1"/>
    <property type="match status" value="1"/>
</dbReference>
<dbReference type="Gene3D" id="2.60.200.30">
    <property type="entry name" value="Probable inorganic polyphosphate/atp-NAD kinase, domain 2"/>
    <property type="match status" value="1"/>
</dbReference>
<dbReference type="HAMAP" id="MF_00361">
    <property type="entry name" value="NAD_kinase"/>
    <property type="match status" value="1"/>
</dbReference>
<dbReference type="InterPro" id="IPR017438">
    <property type="entry name" value="ATP-NAD_kinase_N"/>
</dbReference>
<dbReference type="InterPro" id="IPR017437">
    <property type="entry name" value="ATP-NAD_kinase_PpnK-typ_C"/>
</dbReference>
<dbReference type="InterPro" id="IPR016064">
    <property type="entry name" value="NAD/diacylglycerol_kinase_sf"/>
</dbReference>
<dbReference type="InterPro" id="IPR002504">
    <property type="entry name" value="NADK"/>
</dbReference>
<dbReference type="NCBIfam" id="NF002306">
    <property type="entry name" value="PRK01231.1"/>
    <property type="match status" value="1"/>
</dbReference>
<dbReference type="PANTHER" id="PTHR20275">
    <property type="entry name" value="NAD KINASE"/>
    <property type="match status" value="1"/>
</dbReference>
<dbReference type="PANTHER" id="PTHR20275:SF0">
    <property type="entry name" value="NAD KINASE"/>
    <property type="match status" value="1"/>
</dbReference>
<dbReference type="Pfam" id="PF01513">
    <property type="entry name" value="NAD_kinase"/>
    <property type="match status" value="1"/>
</dbReference>
<dbReference type="Pfam" id="PF20143">
    <property type="entry name" value="NAD_kinase_C"/>
    <property type="match status" value="1"/>
</dbReference>
<dbReference type="SUPFAM" id="SSF111331">
    <property type="entry name" value="NAD kinase/diacylglycerol kinase-like"/>
    <property type="match status" value="1"/>
</dbReference>
<keyword id="KW-0067">ATP-binding</keyword>
<keyword id="KW-0963">Cytoplasm</keyword>
<keyword id="KW-0418">Kinase</keyword>
<keyword id="KW-0520">NAD</keyword>
<keyword id="KW-0521">NADP</keyword>
<keyword id="KW-0547">Nucleotide-binding</keyword>
<keyword id="KW-0808">Transferase</keyword>
<comment type="function">
    <text evidence="1">Involved in the regulation of the intracellular balance of NAD and NADP, and is a key enzyme in the biosynthesis of NADP. Catalyzes specifically the phosphorylation on 2'-hydroxyl of the adenosine moiety of NAD to yield NADP.</text>
</comment>
<comment type="catalytic activity">
    <reaction evidence="1">
        <text>NAD(+) + ATP = ADP + NADP(+) + H(+)</text>
        <dbReference type="Rhea" id="RHEA:18629"/>
        <dbReference type="ChEBI" id="CHEBI:15378"/>
        <dbReference type="ChEBI" id="CHEBI:30616"/>
        <dbReference type="ChEBI" id="CHEBI:57540"/>
        <dbReference type="ChEBI" id="CHEBI:58349"/>
        <dbReference type="ChEBI" id="CHEBI:456216"/>
        <dbReference type="EC" id="2.7.1.23"/>
    </reaction>
</comment>
<comment type="cofactor">
    <cofactor evidence="1">
        <name>a divalent metal cation</name>
        <dbReference type="ChEBI" id="CHEBI:60240"/>
    </cofactor>
</comment>
<comment type="subcellular location">
    <subcellularLocation>
        <location evidence="1">Cytoplasm</location>
    </subcellularLocation>
</comment>
<comment type="similarity">
    <text evidence="1">Belongs to the NAD kinase family.</text>
</comment>
<feature type="chain" id="PRO_1000205421" description="NAD kinase">
    <location>
        <begin position="1"/>
        <end position="296"/>
    </location>
</feature>
<feature type="active site" description="Proton acceptor" evidence="1">
    <location>
        <position position="72"/>
    </location>
</feature>
<feature type="binding site" evidence="1">
    <location>
        <begin position="72"/>
        <end position="73"/>
    </location>
    <ligand>
        <name>NAD(+)</name>
        <dbReference type="ChEBI" id="CHEBI:57540"/>
    </ligand>
</feature>
<feature type="binding site" evidence="1">
    <location>
        <begin position="146"/>
        <end position="147"/>
    </location>
    <ligand>
        <name>NAD(+)</name>
        <dbReference type="ChEBI" id="CHEBI:57540"/>
    </ligand>
</feature>
<feature type="binding site" evidence="1">
    <location>
        <position position="157"/>
    </location>
    <ligand>
        <name>NAD(+)</name>
        <dbReference type="ChEBI" id="CHEBI:57540"/>
    </ligand>
</feature>
<feature type="binding site" evidence="1">
    <location>
        <position position="174"/>
    </location>
    <ligand>
        <name>NAD(+)</name>
        <dbReference type="ChEBI" id="CHEBI:57540"/>
    </ligand>
</feature>
<feature type="binding site" evidence="1">
    <location>
        <position position="176"/>
    </location>
    <ligand>
        <name>NAD(+)</name>
        <dbReference type="ChEBI" id="CHEBI:57540"/>
    </ligand>
</feature>
<feature type="binding site" evidence="1">
    <location>
        <begin position="187"/>
        <end position="192"/>
    </location>
    <ligand>
        <name>NAD(+)</name>
        <dbReference type="ChEBI" id="CHEBI:57540"/>
    </ligand>
</feature>
<feature type="binding site" evidence="1">
    <location>
        <position position="247"/>
    </location>
    <ligand>
        <name>NAD(+)</name>
        <dbReference type="ChEBI" id="CHEBI:57540"/>
    </ligand>
</feature>
<organism>
    <name type="scientific">Pseudomonas fluorescens (strain SBW25)</name>
    <dbReference type="NCBI Taxonomy" id="216595"/>
    <lineage>
        <taxon>Bacteria</taxon>
        <taxon>Pseudomonadati</taxon>
        <taxon>Pseudomonadota</taxon>
        <taxon>Gammaproteobacteria</taxon>
        <taxon>Pseudomonadales</taxon>
        <taxon>Pseudomonadaceae</taxon>
        <taxon>Pseudomonas</taxon>
    </lineage>
</organism>
<name>NADK_PSEFS</name>
<gene>
    <name evidence="1" type="primary">nadK</name>
    <name type="ordered locus">PFLU_2674</name>
</gene>
<reference key="1">
    <citation type="journal article" date="2009" name="Genome Biol.">
        <title>Genomic and genetic analyses of diversity and plant interactions of Pseudomonas fluorescens.</title>
        <authorList>
            <person name="Silby M.W."/>
            <person name="Cerdeno-Tarraga A.M."/>
            <person name="Vernikos G.S."/>
            <person name="Giddens S.R."/>
            <person name="Jackson R.W."/>
            <person name="Preston G.M."/>
            <person name="Zhang X.-X."/>
            <person name="Moon C.D."/>
            <person name="Gehrig S.M."/>
            <person name="Godfrey S.A.C."/>
            <person name="Knight C.G."/>
            <person name="Malone J.G."/>
            <person name="Robinson Z."/>
            <person name="Spiers A.J."/>
            <person name="Harris S."/>
            <person name="Challis G.L."/>
            <person name="Yaxley A.M."/>
            <person name="Harris D."/>
            <person name="Seeger K."/>
            <person name="Murphy L."/>
            <person name="Rutter S."/>
            <person name="Squares R."/>
            <person name="Quail M.A."/>
            <person name="Saunders E."/>
            <person name="Mavromatis K."/>
            <person name="Brettin T.S."/>
            <person name="Bentley S.D."/>
            <person name="Hothersall J."/>
            <person name="Stephens E."/>
            <person name="Thomas C.M."/>
            <person name="Parkhill J."/>
            <person name="Levy S.B."/>
            <person name="Rainey P.B."/>
            <person name="Thomson N.R."/>
        </authorList>
    </citation>
    <scope>NUCLEOTIDE SEQUENCE [LARGE SCALE GENOMIC DNA]</scope>
    <source>
        <strain>SBW25</strain>
    </source>
</reference>
<accession>C3K9T0</accession>